<reference key="1">
    <citation type="journal article" date="1997" name="Nature">
        <title>The nucleotide sequence of Saccharomyces cerevisiae chromosome VII.</title>
        <authorList>
            <person name="Tettelin H."/>
            <person name="Agostoni-Carbone M.L."/>
            <person name="Albermann K."/>
            <person name="Albers M."/>
            <person name="Arroyo J."/>
            <person name="Backes U."/>
            <person name="Barreiros T."/>
            <person name="Bertani I."/>
            <person name="Bjourson A.J."/>
            <person name="Brueckner M."/>
            <person name="Bruschi C.V."/>
            <person name="Carignani G."/>
            <person name="Castagnoli L."/>
            <person name="Cerdan E."/>
            <person name="Clemente M.L."/>
            <person name="Coblenz A."/>
            <person name="Coglievina M."/>
            <person name="Coissac E."/>
            <person name="Defoor E."/>
            <person name="Del Bino S."/>
            <person name="Delius H."/>
            <person name="Delneri D."/>
            <person name="de Wergifosse P."/>
            <person name="Dujon B."/>
            <person name="Durand P."/>
            <person name="Entian K.-D."/>
            <person name="Eraso P."/>
            <person name="Escribano V."/>
            <person name="Fabiani L."/>
            <person name="Fartmann B."/>
            <person name="Feroli F."/>
            <person name="Feuermann M."/>
            <person name="Frontali L."/>
            <person name="Garcia-Gonzalez M."/>
            <person name="Garcia-Saez M.I."/>
            <person name="Goffeau A."/>
            <person name="Guerreiro P."/>
            <person name="Hani J."/>
            <person name="Hansen M."/>
            <person name="Hebling U."/>
            <person name="Hernandez K."/>
            <person name="Heumann K."/>
            <person name="Hilger F."/>
            <person name="Hofmann B."/>
            <person name="Indge K.J."/>
            <person name="James C.M."/>
            <person name="Klima R."/>
            <person name="Koetter P."/>
            <person name="Kramer B."/>
            <person name="Kramer W."/>
            <person name="Lauquin G."/>
            <person name="Leuther H."/>
            <person name="Louis E.J."/>
            <person name="Maillier E."/>
            <person name="Marconi A."/>
            <person name="Martegani E."/>
            <person name="Mazon M.J."/>
            <person name="Mazzoni C."/>
            <person name="McReynolds A.D.K."/>
            <person name="Melchioretto P."/>
            <person name="Mewes H.-W."/>
            <person name="Minenkova O."/>
            <person name="Mueller-Auer S."/>
            <person name="Nawrocki A."/>
            <person name="Netter P."/>
            <person name="Neu R."/>
            <person name="Nombela C."/>
            <person name="Oliver S.G."/>
            <person name="Panzeri L."/>
            <person name="Paoluzi S."/>
            <person name="Plevani P."/>
            <person name="Portetelle D."/>
            <person name="Portillo F."/>
            <person name="Potier S."/>
            <person name="Purnelle B."/>
            <person name="Rieger M."/>
            <person name="Riles L."/>
            <person name="Rinaldi T."/>
            <person name="Robben J."/>
            <person name="Rodrigues-Pousada C."/>
            <person name="Rodriguez-Belmonte E."/>
            <person name="Rodriguez-Torres A.M."/>
            <person name="Rose M."/>
            <person name="Ruzzi M."/>
            <person name="Saliola M."/>
            <person name="Sanchez-Perez M."/>
            <person name="Schaefer B."/>
            <person name="Schaefer M."/>
            <person name="Scharfe M."/>
            <person name="Schmidheini T."/>
            <person name="Schreer A."/>
            <person name="Skala J."/>
            <person name="Souciet J.-L."/>
            <person name="Steensma H.Y."/>
            <person name="Talla E."/>
            <person name="Thierry A."/>
            <person name="Vandenbol M."/>
            <person name="van der Aart Q.J.M."/>
            <person name="Van Dyck L."/>
            <person name="Vanoni M."/>
            <person name="Verhasselt P."/>
            <person name="Voet M."/>
            <person name="Volckaert G."/>
            <person name="Wambutt R."/>
            <person name="Watson M.D."/>
            <person name="Weber N."/>
            <person name="Wedler E."/>
            <person name="Wedler H."/>
            <person name="Wipfli P."/>
            <person name="Wolf K."/>
            <person name="Wright L.F."/>
            <person name="Zaccaria P."/>
            <person name="Zimmermann M."/>
            <person name="Zollner A."/>
            <person name="Kleine K."/>
        </authorList>
    </citation>
    <scope>NUCLEOTIDE SEQUENCE [LARGE SCALE GENOMIC DNA]</scope>
    <source>
        <strain>ATCC 204508 / S288c</strain>
    </source>
</reference>
<reference key="2">
    <citation type="journal article" date="2014" name="G3 (Bethesda)">
        <title>The reference genome sequence of Saccharomyces cerevisiae: Then and now.</title>
        <authorList>
            <person name="Engel S.R."/>
            <person name="Dietrich F.S."/>
            <person name="Fisk D.G."/>
            <person name="Binkley G."/>
            <person name="Balakrishnan R."/>
            <person name="Costanzo M.C."/>
            <person name="Dwight S.S."/>
            <person name="Hitz B.C."/>
            <person name="Karra K."/>
            <person name="Nash R.S."/>
            <person name="Weng S."/>
            <person name="Wong E.D."/>
            <person name="Lloyd P."/>
            <person name="Skrzypek M.S."/>
            <person name="Miyasato S.R."/>
            <person name="Simison M."/>
            <person name="Cherry J.M."/>
        </authorList>
    </citation>
    <scope>GENOME REANNOTATION</scope>
    <source>
        <strain>ATCC 204508 / S288c</strain>
    </source>
</reference>
<reference key="3">
    <citation type="journal article" date="1998" name="Genome Res.">
        <title>Transposable elements and genome organization: a comprehensive survey of retrotransposons revealed by the complete Saccharomyces cerevisiae genome sequence.</title>
        <authorList>
            <person name="Kim J.M."/>
            <person name="Vanguri S."/>
            <person name="Boeke J.D."/>
            <person name="Gabriel A."/>
            <person name="Voytas D.F."/>
        </authorList>
    </citation>
    <scope>NOMENCLATURE</scope>
</reference>
<reference key="4">
    <citation type="journal article" date="2005" name="Cytogenet. Genome Res.">
        <title>Happy together: the life and times of Ty retrotransposons and their hosts.</title>
        <authorList>
            <person name="Lesage P."/>
            <person name="Todeschini A.L."/>
        </authorList>
    </citation>
    <scope>REVIEW</scope>
    <scope>IDENTIFICATION OF FRAMESHIFT</scope>
</reference>
<dbReference type="EC" id="3.4.23.-"/>
<dbReference type="EC" id="2.7.7.49"/>
<dbReference type="EC" id="2.7.7.7"/>
<dbReference type="EC" id="3.1.26.4"/>
<dbReference type="EMBL" id="Z72823">
    <property type="protein sequence ID" value="CAA97029.1"/>
    <property type="status" value="ALT_SEQ"/>
    <property type="molecule type" value="Genomic_DNA"/>
</dbReference>
<dbReference type="EMBL" id="Z72823">
    <property type="protein sequence ID" value="CAA97030.1"/>
    <property type="status" value="ALT_SEQ"/>
    <property type="molecule type" value="Genomic_DNA"/>
</dbReference>
<dbReference type="EMBL" id="Z72824">
    <property type="protein sequence ID" value="CAA97032.1"/>
    <property type="status" value="ALT_SEQ"/>
    <property type="molecule type" value="Genomic_DNA"/>
</dbReference>
<dbReference type="EMBL" id="Z72824">
    <property type="protein sequence ID" value="CAA97037.1"/>
    <property type="status" value="ALT_SEQ"/>
    <property type="molecule type" value="Genomic_DNA"/>
</dbReference>
<dbReference type="MEROPS" id="A11.003"/>
<dbReference type="GO" id="GO:0005737">
    <property type="term" value="C:cytoplasm"/>
    <property type="evidence" value="ECO:0007669"/>
    <property type="project" value="UniProtKB-SubCell"/>
</dbReference>
<dbReference type="GO" id="GO:0005634">
    <property type="term" value="C:nucleus"/>
    <property type="evidence" value="ECO:0007669"/>
    <property type="project" value="UniProtKB-SubCell"/>
</dbReference>
<dbReference type="GO" id="GO:0004190">
    <property type="term" value="F:aspartic-type endopeptidase activity"/>
    <property type="evidence" value="ECO:0007669"/>
    <property type="project" value="UniProtKB-KW"/>
</dbReference>
<dbReference type="GO" id="GO:0005524">
    <property type="term" value="F:ATP binding"/>
    <property type="evidence" value="ECO:0007669"/>
    <property type="project" value="UniProtKB-KW"/>
</dbReference>
<dbReference type="GO" id="GO:0003677">
    <property type="term" value="F:DNA binding"/>
    <property type="evidence" value="ECO:0007669"/>
    <property type="project" value="UniProtKB-KW"/>
</dbReference>
<dbReference type="GO" id="GO:0003887">
    <property type="term" value="F:DNA-directed DNA polymerase activity"/>
    <property type="evidence" value="ECO:0007669"/>
    <property type="project" value="UniProtKB-KW"/>
</dbReference>
<dbReference type="GO" id="GO:0003723">
    <property type="term" value="F:RNA binding"/>
    <property type="evidence" value="ECO:0007669"/>
    <property type="project" value="UniProtKB-KW"/>
</dbReference>
<dbReference type="GO" id="GO:0003964">
    <property type="term" value="F:RNA-directed DNA polymerase activity"/>
    <property type="evidence" value="ECO:0007669"/>
    <property type="project" value="UniProtKB-KW"/>
</dbReference>
<dbReference type="GO" id="GO:0004523">
    <property type="term" value="F:RNA-DNA hybrid ribonuclease activity"/>
    <property type="evidence" value="ECO:0007669"/>
    <property type="project" value="UniProtKB-EC"/>
</dbReference>
<dbReference type="GO" id="GO:0008270">
    <property type="term" value="F:zinc ion binding"/>
    <property type="evidence" value="ECO:0007669"/>
    <property type="project" value="UniProtKB-KW"/>
</dbReference>
<dbReference type="GO" id="GO:0015074">
    <property type="term" value="P:DNA integration"/>
    <property type="evidence" value="ECO:0007669"/>
    <property type="project" value="UniProtKB-KW"/>
</dbReference>
<dbReference type="GO" id="GO:0006310">
    <property type="term" value="P:DNA recombination"/>
    <property type="evidence" value="ECO:0007669"/>
    <property type="project" value="UniProtKB-KW"/>
</dbReference>
<dbReference type="GO" id="GO:0006508">
    <property type="term" value="P:proteolysis"/>
    <property type="evidence" value="ECO:0007669"/>
    <property type="project" value="UniProtKB-KW"/>
</dbReference>
<dbReference type="GO" id="GO:0032196">
    <property type="term" value="P:transposition"/>
    <property type="evidence" value="ECO:0007669"/>
    <property type="project" value="UniProtKB-KW"/>
</dbReference>
<dbReference type="GO" id="GO:0075523">
    <property type="term" value="P:viral translational frameshifting"/>
    <property type="evidence" value="ECO:0007669"/>
    <property type="project" value="UniProtKB-KW"/>
</dbReference>
<dbReference type="CDD" id="cd09272">
    <property type="entry name" value="RNase_HI_RT_Ty1"/>
    <property type="match status" value="1"/>
</dbReference>
<dbReference type="FunFam" id="3.30.420.10:FF:000050">
    <property type="entry name" value="Transposon Ty2-DR3 Gag-Pol polyprotein"/>
    <property type="match status" value="1"/>
</dbReference>
<dbReference type="Gene3D" id="3.30.420.10">
    <property type="entry name" value="Ribonuclease H-like superfamily/Ribonuclease H"/>
    <property type="match status" value="1"/>
</dbReference>
<dbReference type="InterPro" id="IPR043502">
    <property type="entry name" value="DNA/RNA_pol_sf"/>
</dbReference>
<dbReference type="InterPro" id="IPR001584">
    <property type="entry name" value="Integrase_cat-core"/>
</dbReference>
<dbReference type="InterPro" id="IPR054722">
    <property type="entry name" value="PolX-like_BBD"/>
</dbReference>
<dbReference type="InterPro" id="IPR039537">
    <property type="entry name" value="Retrotran_Ty1/copia-like"/>
</dbReference>
<dbReference type="InterPro" id="IPR012337">
    <property type="entry name" value="RNaseH-like_sf"/>
</dbReference>
<dbReference type="InterPro" id="IPR036397">
    <property type="entry name" value="RNaseH_sf"/>
</dbReference>
<dbReference type="InterPro" id="IPR013103">
    <property type="entry name" value="RVT_2"/>
</dbReference>
<dbReference type="InterPro" id="IPR015820">
    <property type="entry name" value="TYA"/>
</dbReference>
<dbReference type="PANTHER" id="PTHR42648">
    <property type="entry name" value="TRANSPOSASE, PUTATIVE-RELATED"/>
    <property type="match status" value="1"/>
</dbReference>
<dbReference type="PANTHER" id="PTHR42648:SF11">
    <property type="entry name" value="TRANSPOSON TY4-P GAG-POL POLYPROTEIN"/>
    <property type="match status" value="1"/>
</dbReference>
<dbReference type="Pfam" id="PF22936">
    <property type="entry name" value="Pol_BBD"/>
    <property type="match status" value="1"/>
</dbReference>
<dbReference type="Pfam" id="PF00665">
    <property type="entry name" value="rve"/>
    <property type="match status" value="1"/>
</dbReference>
<dbReference type="Pfam" id="PF07727">
    <property type="entry name" value="RVT_2"/>
    <property type="match status" value="1"/>
</dbReference>
<dbReference type="Pfam" id="PF01021">
    <property type="entry name" value="TYA"/>
    <property type="match status" value="1"/>
</dbReference>
<dbReference type="SUPFAM" id="SSF56672">
    <property type="entry name" value="DNA/RNA polymerases"/>
    <property type="match status" value="1"/>
</dbReference>
<dbReference type="SUPFAM" id="SSF53098">
    <property type="entry name" value="Ribonuclease H-like"/>
    <property type="match status" value="1"/>
</dbReference>
<dbReference type="PROSITE" id="PS50994">
    <property type="entry name" value="INTEGRASE"/>
    <property type="match status" value="1"/>
</dbReference>
<feature type="chain" id="PRO_0000279316" description="Transposon Ty2-GR1 Gag-Pol polyprotein">
    <location>
        <begin position="1"/>
        <end position="1770"/>
    </location>
</feature>
<feature type="chain" id="PRO_0000279317" description="Capsid protein" evidence="1">
    <location>
        <begin position="1"/>
        <end position="397"/>
    </location>
</feature>
<feature type="chain" id="PRO_0000279318" description="Ty2 protease" evidence="1">
    <location>
        <begin position="398"/>
        <end position="578"/>
    </location>
</feature>
<feature type="chain" id="PRO_0000279319" description="Integrase" evidence="1">
    <location>
        <begin position="579"/>
        <end position="1232"/>
    </location>
</feature>
<feature type="chain" id="PRO_0000279320" description="Reverse transcriptase/ribonuclease H" evidence="1">
    <location>
        <begin position="1233"/>
        <end position="1770"/>
    </location>
</feature>
<feature type="domain" description="Integrase catalytic" evidence="2">
    <location>
        <begin position="656"/>
        <end position="831"/>
    </location>
</feature>
<feature type="domain" description="Reverse transcriptase Ty1/copia-type">
    <location>
        <begin position="1353"/>
        <end position="1491"/>
    </location>
</feature>
<feature type="domain" description="RNase H Ty1/copia-type">
    <location>
        <begin position="1625"/>
        <end position="1767"/>
    </location>
</feature>
<feature type="region of interest" description="Disordered" evidence="3">
    <location>
        <begin position="1"/>
        <end position="86"/>
    </location>
</feature>
<feature type="region of interest" description="RNA-binding" evidence="1">
    <location>
        <begin position="295"/>
        <end position="397"/>
    </location>
</feature>
<feature type="region of interest" description="Disordered" evidence="3">
    <location>
        <begin position="360"/>
        <end position="453"/>
    </location>
</feature>
<feature type="region of interest" description="Integrase-type zinc finger-like">
    <location>
        <begin position="579"/>
        <end position="636"/>
    </location>
</feature>
<feature type="region of interest" description="Disordered" evidence="3">
    <location>
        <begin position="1004"/>
        <end position="1034"/>
    </location>
</feature>
<feature type="region of interest" description="Disordered" evidence="3">
    <location>
        <begin position="1059"/>
        <end position="1135"/>
    </location>
</feature>
<feature type="region of interest" description="Disordered" evidence="3">
    <location>
        <begin position="1146"/>
        <end position="1165"/>
    </location>
</feature>
<feature type="region of interest" description="Disordered" evidence="3">
    <location>
        <begin position="1170"/>
        <end position="1205"/>
    </location>
</feature>
<feature type="short sequence motif" description="Bipartite nuclear localization signal" evidence="1">
    <location>
        <begin position="1193"/>
        <end position="1227"/>
    </location>
</feature>
<feature type="compositionally biased region" description="Polar residues" evidence="3">
    <location>
        <begin position="1"/>
        <end position="11"/>
    </location>
</feature>
<feature type="compositionally biased region" description="Polar residues" evidence="3">
    <location>
        <begin position="19"/>
        <end position="39"/>
    </location>
</feature>
<feature type="compositionally biased region" description="Polar residues" evidence="3">
    <location>
        <begin position="49"/>
        <end position="60"/>
    </location>
</feature>
<feature type="compositionally biased region" description="Low complexity" evidence="3">
    <location>
        <begin position="369"/>
        <end position="381"/>
    </location>
</feature>
<feature type="compositionally biased region" description="Polar residues" evidence="3">
    <location>
        <begin position="399"/>
        <end position="408"/>
    </location>
</feature>
<feature type="compositionally biased region" description="Polar residues" evidence="3">
    <location>
        <begin position="1009"/>
        <end position="1034"/>
    </location>
</feature>
<feature type="compositionally biased region" description="Polar residues" evidence="3">
    <location>
        <begin position="1065"/>
        <end position="1082"/>
    </location>
</feature>
<feature type="compositionally biased region" description="Basic and acidic residues" evidence="3">
    <location>
        <begin position="1151"/>
        <end position="1165"/>
    </location>
</feature>
<feature type="active site" description="For protease activity; shared with dimeric partner" evidence="1">
    <location>
        <position position="457"/>
    </location>
</feature>
<feature type="binding site" evidence="2">
    <location>
        <position position="667"/>
    </location>
    <ligand>
        <name>Mg(2+)</name>
        <dbReference type="ChEBI" id="CHEBI:18420"/>
        <label>1</label>
        <note>catalytic; for integrase activity</note>
    </ligand>
</feature>
<feature type="binding site" evidence="2">
    <location>
        <position position="732"/>
    </location>
    <ligand>
        <name>Mg(2+)</name>
        <dbReference type="ChEBI" id="CHEBI:18420"/>
        <label>1</label>
        <note>catalytic; for integrase activity</note>
    </ligand>
</feature>
<feature type="binding site" evidence="2">
    <location>
        <position position="1361"/>
    </location>
    <ligand>
        <name>Mg(2+)</name>
        <dbReference type="ChEBI" id="CHEBI:18420"/>
        <label>2</label>
        <note>catalytic; for reverse transcriptase activity</note>
    </ligand>
</feature>
<feature type="binding site" evidence="2">
    <location>
        <position position="1442"/>
    </location>
    <ligand>
        <name>Mg(2+)</name>
        <dbReference type="ChEBI" id="CHEBI:18420"/>
        <label>2</label>
        <note>catalytic; for reverse transcriptase activity</note>
    </ligand>
</feature>
<feature type="binding site" evidence="2">
    <location>
        <position position="1443"/>
    </location>
    <ligand>
        <name>Mg(2+)</name>
        <dbReference type="ChEBI" id="CHEBI:18420"/>
        <label>2</label>
        <note>catalytic; for reverse transcriptase activity</note>
    </ligand>
</feature>
<feature type="binding site" evidence="2">
    <location>
        <position position="1625"/>
    </location>
    <ligand>
        <name>Mg(2+)</name>
        <dbReference type="ChEBI" id="CHEBI:18420"/>
        <label>3</label>
        <note>catalytic; for RNase H activity</note>
    </ligand>
</feature>
<feature type="binding site" evidence="2">
    <location>
        <position position="1667"/>
    </location>
    <ligand>
        <name>Mg(2+)</name>
        <dbReference type="ChEBI" id="CHEBI:18420"/>
        <label>3</label>
        <note>catalytic; for RNase H activity</note>
    </ligand>
</feature>
<feature type="binding site" evidence="2">
    <location>
        <position position="1700"/>
    </location>
    <ligand>
        <name>Mg(2+)</name>
        <dbReference type="ChEBI" id="CHEBI:18420"/>
        <label>3</label>
        <note>catalytic; for RNase H activity</note>
    </ligand>
</feature>
<feature type="site" description="Cleavage; by Ty2 protease" evidence="1">
    <location>
        <begin position="397"/>
        <end position="398"/>
    </location>
</feature>
<feature type="site" description="Cleavage; by Ty2 protease" evidence="1">
    <location>
        <begin position="578"/>
        <end position="579"/>
    </location>
</feature>
<feature type="site" description="Cleavage; by Ty2 protease" evidence="1">
    <location>
        <begin position="1232"/>
        <end position="1233"/>
    </location>
</feature>
<name>YG21B_YEAST</name>
<organism>
    <name type="scientific">Saccharomyces cerevisiae (strain ATCC 204508 / S288c)</name>
    <name type="common">Baker's yeast</name>
    <dbReference type="NCBI Taxonomy" id="559292"/>
    <lineage>
        <taxon>Eukaryota</taxon>
        <taxon>Fungi</taxon>
        <taxon>Dikarya</taxon>
        <taxon>Ascomycota</taxon>
        <taxon>Saccharomycotina</taxon>
        <taxon>Saccharomycetes</taxon>
        <taxon>Saccharomycetales</taxon>
        <taxon>Saccharomycetaceae</taxon>
        <taxon>Saccharomyces</taxon>
    </lineage>
</organism>
<sequence length="1770" mass="202119">MESQQLHQNPHSLHGSAYASVTSKEVPSNQDPLAVSASNLPEFDRDSTKVNSQQETTPGTSAVPENHHHVSPQPASVPPPQNGQYQQHGMMTPNKAMASNWAHYQQPSMMTCSHYQTSPAYYQPDPHYPLPQYIPPLSTSSPDPIDLKNQHSEIPQAKTKVGNNVLPPHTLTSEENFSTWVKFYIRFLKNSNLGDIIPNDQGEIKRQMTYEEHAYIYNTFQAFAPFHLLPTWVKQILEINYADILTVLCKSVSKMQTNNQELKDWIALANLEYDGSTSADTFEITVSTIIQRLKENNINVSDRLACQLILKGLSGDFKYLRNQYRTKTNMKLSQLFAEIQLIYDENKIMNLNKPSQYKQHSEYKNVSRTSPNTTNTKVTTRNYHRTNSSKPRAAKAHNIATSSKFSRVNNDHINESTVSSQYLSDDDELSLGQQQKESKPTHTIDSNDELPDHLLIDSGASQTLVRSAHYLHHATPNSEINIVDAQKQDIPINAIGNLHFNFQNGTKTSIKALHTPNIAYDLLSLSELANQNITACFTRNTLERSDGTVLAPIVKHGDFYWLSKKYLIPSHISKLTINNVNKSKSVNKYPYPLIHRMLGHANFRSIQKSLKKNAVTYLKESDIEWSNASTYQCPDCLIGKSTKHRHVKGSRLKYQESYEPFQYLHTDIFGPVHHLPKSAPSYFISFTDEKTRFQWVYPLHDRREESILNVFTSILAFIKNQFNARVLVIQMDRGSEYTNKTLHKFFTNRGITACYTTTADSRAHGVAERLNRTLLNDCRTLLHCSGLPNHLWFSAVEFSTIIRNSLVSPKKRKSARQHAGLAGLDITTILPFGQPVIVNNHNPDSKIHPRGIPGYALHPSRNSYGYIIYLPSLKKTVDTTNYVILQNKQTKLDQFDYDTLTFDDDLNRLTAHNQSFIEQNETEQSYDQNTESDHDYQSEIEINSDPLVNDFSSQSINPLQLDKEPVQKVRAPKEVDADISEYNILPSTIRSRTPHIINKESTEMGGTVESDTTSPRHSSTFTARNQNRPGSTNEMIDLTSQDRVNYGLENIKTTRLGGTEEPYIQRNSDTNIKYRTTNSTPSIDDRSSNSESTTPIISIETKAVCDNTPSIDTDPPEYRSSDHATPNIMPDKSSKNVTADSILDDLPLPDLTHKSPTDTSDVSKDIPHIHSRQTNSSLGGMDDSNVLTTTKSKKRSLEDNETEIEVSRDTWNNKNMRSLEPPRSKKRINLIAAIKGVKSIKPVRTTLRYDEAITYNKDNKEKDRYVEAYHKEISQLLKMNTWDTNKYYDRNDIDPKKVINSMFIFNKKRDGTHKARFVARGDIQHPDTYDSDMQSNTVHHYALMTSLSIALDNDYYITQLDISSAYLYADIKEELYIRPPPHLGLNDKLLRLRKSLYGLKQSGANWYETIKSYLINCCDMQEVRGWSCVFKNSQVTICLFVDDMILFSKDLNANKKIITTLKKQYDTKIINLGESDNEIQYDILGLEIKYQRSKYMKLGMEKSLTEKLPKLNVPLNPKGKKLRAPGQPGHYIDQDELEIDEDEYKEKVHEMQKLIGLASYVGYKFRFDLLYYINTLAQHILFPSRQVLDMTYELIQFMWDTRDKQLIWHKNKPTKPDNKLVAISDASYGNQPYYKSQIGNIFLLNGKVIGGKSTKASLTCTSTTEAEIHAVSEAIPLLNNLSHLVQELNKKPIIKGLLTDSRSTISIIKSTNEEKFRNRFFGTKAMRLRDEVSGNNLYVYYIETKKNIADVMTKPLPIKTFKLLTNKWIH</sequence>
<keyword id="KW-0064">Aspartyl protease</keyword>
<keyword id="KW-0067">ATP-binding</keyword>
<keyword id="KW-0963">Cytoplasm</keyword>
<keyword id="KW-0229">DNA integration</keyword>
<keyword id="KW-0233">DNA recombination</keyword>
<keyword id="KW-0238">DNA-binding</keyword>
<keyword id="KW-0239">DNA-directed DNA polymerase</keyword>
<keyword id="KW-0255">Endonuclease</keyword>
<keyword id="KW-0378">Hydrolase</keyword>
<keyword id="KW-0460">Magnesium</keyword>
<keyword id="KW-0479">Metal-binding</keyword>
<keyword id="KW-0511">Multifunctional enzyme</keyword>
<keyword id="KW-0540">Nuclease</keyword>
<keyword id="KW-0547">Nucleotide-binding</keyword>
<keyword id="KW-0548">Nucleotidyltransferase</keyword>
<keyword id="KW-0539">Nucleus</keyword>
<keyword id="KW-0645">Protease</keyword>
<keyword id="KW-0688">Ribosomal frameshifting</keyword>
<keyword id="KW-0694">RNA-binding</keyword>
<keyword id="KW-0695">RNA-directed DNA polymerase</keyword>
<keyword id="KW-0808">Transferase</keyword>
<keyword id="KW-0814">Transposable element</keyword>
<keyword id="KW-0815">Transposition</keyword>
<keyword id="KW-1188">Viral release from host cell</keyword>
<keyword id="KW-0917">Virion maturation</keyword>
<keyword id="KW-0862">Zinc</keyword>
<keyword id="KW-0863">Zinc-finger</keyword>
<gene>
    <name type="primary">TY2B-GR1</name>
    <name type="synonym">YGRCTy2-1 POL</name>
    <name type="ordered locus">YGR038C-D/YGR038C-C</name>
</gene>
<accession>Q12337</accession>
<proteinExistence type="uncertain"/>
<comment type="function">
    <text evidence="1">Capsid protein (CA) is the structural component of the virus-like particle (VLP), forming the shell that encapsulates the retrotransposons dimeric RNA genome. The particles are assembled from trimer-clustered units and there are holes in the capsid shells that allow for the diffusion of macromolecules. CA also has nucleocapsid-like chaperone activity, promoting primer tRNA(i)-Met annealing to the multipartite primer-binding site (PBS), dimerization of Ty2 RNA and initiation of reverse transcription (By similarity).</text>
</comment>
<comment type="function">
    <text evidence="1">The aspartyl protease (PR) mediates the proteolytic cleavages of the Gag and Gag-Pol polyproteins after assembly of the VLP.</text>
</comment>
<comment type="function">
    <text evidence="1">Reverse transcriptase/ribonuclease H (RT) is a multifunctional enzyme that catalyzes the conversion of the retro-elements RNA genome into dsDNA within the VLP. The enzyme displays a DNA polymerase activity that can copy either DNA or RNA templates, and a ribonuclease H (RNase H) activity that cleaves the RNA strand of RNA-DNA heteroduplexes during plus-strand synthesis and hydrolyzes RNA primers. The conversion leads to a linear dsDNA copy of the retrotransposon that includes long terminal repeats (LTRs) at both ends (By similarity).</text>
</comment>
<comment type="function">
    <text evidence="1">Integrase (IN) targets the VLP to the nucleus, where a subparticle preintegration complex (PIC) containing at least integrase and the newly synthesized dsDNA copy of the retrotransposon must transit the nuclear membrane. Once in the nucleus, integrase performs the integration of the dsDNA into the host genome (By similarity).</text>
</comment>
<comment type="catalytic activity">
    <reaction>
        <text>DNA(n) + a 2'-deoxyribonucleoside 5'-triphosphate = DNA(n+1) + diphosphate</text>
        <dbReference type="Rhea" id="RHEA:22508"/>
        <dbReference type="Rhea" id="RHEA-COMP:17339"/>
        <dbReference type="Rhea" id="RHEA-COMP:17340"/>
        <dbReference type="ChEBI" id="CHEBI:33019"/>
        <dbReference type="ChEBI" id="CHEBI:61560"/>
        <dbReference type="ChEBI" id="CHEBI:173112"/>
        <dbReference type="EC" id="2.7.7.49"/>
    </reaction>
</comment>
<comment type="catalytic activity">
    <reaction>
        <text>DNA(n) + a 2'-deoxyribonucleoside 5'-triphosphate = DNA(n+1) + diphosphate</text>
        <dbReference type="Rhea" id="RHEA:22508"/>
        <dbReference type="Rhea" id="RHEA-COMP:17339"/>
        <dbReference type="Rhea" id="RHEA-COMP:17340"/>
        <dbReference type="ChEBI" id="CHEBI:33019"/>
        <dbReference type="ChEBI" id="CHEBI:61560"/>
        <dbReference type="ChEBI" id="CHEBI:173112"/>
        <dbReference type="EC" id="2.7.7.7"/>
    </reaction>
</comment>
<comment type="catalytic activity">
    <reaction>
        <text>Endonucleolytic cleavage to 5'-phosphomonoester.</text>
        <dbReference type="EC" id="3.1.26.4"/>
    </reaction>
</comment>
<comment type="subunit">
    <text evidence="1">The capsid protein forms a homotrimer, from which the VLPs are assembled. The protease is a homodimer, whose active site consists of two apposed aspartic acid residues (By similarity).</text>
</comment>
<comment type="subcellular location">
    <subcellularLocation>
        <location>Cytoplasm</location>
    </subcellularLocation>
    <subcellularLocation>
        <location evidence="1">Nucleus</location>
    </subcellularLocation>
</comment>
<comment type="domain">
    <text evidence="1">The C-terminal RNA-binding region of CA is sufficient for all its nucleocapsid-like chaperone activities.</text>
</comment>
<comment type="domain">
    <text evidence="1">Integrase core domain contains the D-x(n)-D-x(35)-E motif, named for the phylogenetically conserved glutamic acid and aspartic acid residues and the invariant 35 amino acid spacing between the second and third acidic residues. Each acidic residue of the D,D(35)E motif is independently essential for the 3'-processing and strand transfer activities of purified integrase protein (By similarity).</text>
</comment>
<comment type="PTM">
    <text evidence="1">Initially, virus-like particles (VLPs) are composed of the structural unprocessed proteins Gag and Gag-Pol, and also contain the host initiator methionine tRNA (tRNA(i)-Met) which serves as a primer for minus-strand DNA synthesis, and a dimer of genomic Ty RNA. Processing of the polyproteins occurs within the particle and proceeds by an ordered pathway, called maturation. First, the protease (PR) is released by autocatalytic cleavage of the Gag-Pol polyprotein, and this cleavage is a prerequisite for subsequent processing at the remaining sites to release the mature structural and catalytic proteins. Maturation takes place prior to the RT reaction and is required to produce transposition-competent VLPs (By similarity).</text>
</comment>
<comment type="miscellaneous">
    <text>The Gag-Pol polyprotein is generated by a +1 ribosomal frameshift between the codons for Leu-431 and Gly-432. The Gag polyprotein is also produced by itself from conventional translation of the YGR038C-A ORF.</text>
</comment>
<comment type="miscellaneous">
    <text>Retrotransposons are mobile genetic entities that are able to replicate via an RNA intermediate and a reverse transcription step. In contrast to retroviruses, retrotransposons are non-infectious, lack an envelope and remain intracellular. Ty2 retrotransposons belong to the copia elements (pseudoviridae).</text>
</comment>
<comment type="caution">
    <text evidence="5 6">Could be the product of a pseudogene unlikely to encode a functional protein. Transposon Ty2-GR1 (YGRCTy2-1) has a stop codon in position 28, which disrupts the ORF coding for protein TY2A, and a frameshift at position 813, which disrupts the ORF coding for protein TY2B. Because of that it is not part of the S.cerevisiae S288c complete/reference proteome set.</text>
</comment>
<comment type="sequence caution" evidence="4">
    <conflict type="erroneous gene model prediction">
        <sequence resource="EMBL-CDS" id="CAA97029"/>
    </conflict>
</comment>
<comment type="sequence caution" evidence="4">
    <conflict type="frameshift">
        <sequence resource="EMBL-CDS" id="CAA97029"/>
    </conflict>
</comment>
<comment type="sequence caution" evidence="4">
    <conflict type="erroneous gene model prediction">
        <sequence resource="EMBL-CDS" id="CAA97030"/>
    </conflict>
</comment>
<comment type="sequence caution" evidence="4">
    <conflict type="frameshift">
        <sequence resource="EMBL-CDS" id="CAA97030"/>
    </conflict>
</comment>
<comment type="sequence caution" evidence="4">
    <conflict type="erroneous gene model prediction">
        <sequence resource="EMBL-CDS" id="CAA97032"/>
    </conflict>
</comment>
<comment type="sequence caution" evidence="4">
    <conflict type="frameshift">
        <sequence resource="EMBL-CDS" id="CAA97032"/>
    </conflict>
</comment>
<comment type="sequence caution" evidence="4">
    <conflict type="erroneous gene model prediction">
        <sequence resource="EMBL-CDS" id="CAA97037"/>
    </conflict>
</comment>
<comment type="sequence caution" evidence="4">
    <conflict type="frameshift">
        <sequence resource="EMBL-CDS" id="CAA97037"/>
    </conflict>
</comment>
<protein>
    <recommendedName>
        <fullName>Transposon Ty2-GR1 Gag-Pol polyprotein</fullName>
    </recommendedName>
    <alternativeName>
        <fullName>TY2A-TY2B</fullName>
    </alternativeName>
    <alternativeName>
        <fullName>Transposon Ty2 TYA-TYB polyprotein</fullName>
    </alternativeName>
    <component>
        <recommendedName>
            <fullName>Capsid protein</fullName>
            <shortName>CA</shortName>
        </recommendedName>
    </component>
    <component>
        <recommendedName>
            <fullName>Ty2 protease</fullName>
            <shortName>PR</shortName>
            <ecNumber>3.4.23.-</ecNumber>
        </recommendedName>
    </component>
    <component>
        <recommendedName>
            <fullName>Integrase</fullName>
            <shortName>IN</shortName>
        </recommendedName>
    </component>
    <component>
        <recommendedName>
            <fullName>Reverse transcriptase/ribonuclease H</fullName>
            <shortName>RT</shortName>
            <shortName>RT-RH</shortName>
            <ecNumber>2.7.7.49</ecNumber>
            <ecNumber>2.7.7.7</ecNumber>
            <ecNumber>3.1.26.4</ecNumber>
        </recommendedName>
    </component>
</protein>
<evidence type="ECO:0000250" key="1"/>
<evidence type="ECO:0000255" key="2">
    <source>
        <dbReference type="PROSITE-ProRule" id="PRU00457"/>
    </source>
</evidence>
<evidence type="ECO:0000256" key="3">
    <source>
        <dbReference type="SAM" id="MobiDB-lite"/>
    </source>
</evidence>
<evidence type="ECO:0000305" key="4"/>
<evidence type="ECO:0000305" key="5">
    <source>
    </source>
</evidence>
<evidence type="ECO:0000305" key="6">
    <source>
    </source>
</evidence>